<sequence>MFPMVTEFMNYGQQTIRAARYIGQGFMITLSHANRLPVTIQYPYEKLITSERFRGRIHFEFDKCIACEVCVRVCPIDLPVVDWKLETDIRKKRLLNYSIDFGICIFCGNCVEYCPTNCLSMTEEYELSTYDRHELNYNQIALGRLPMSIIDDYTIRTILNLPEIKT</sequence>
<keyword id="KW-0004">4Fe-4S</keyword>
<keyword id="KW-0150">Chloroplast</keyword>
<keyword id="KW-0408">Iron</keyword>
<keyword id="KW-0411">Iron-sulfur</keyword>
<keyword id="KW-0472">Membrane</keyword>
<keyword id="KW-0479">Metal-binding</keyword>
<keyword id="KW-0520">NAD</keyword>
<keyword id="KW-0521">NADP</keyword>
<keyword id="KW-0934">Plastid</keyword>
<keyword id="KW-0618">Plastoquinone</keyword>
<keyword id="KW-0874">Quinone</keyword>
<keyword id="KW-0677">Repeat</keyword>
<keyword id="KW-0793">Thylakoid</keyword>
<keyword id="KW-1278">Translocase</keyword>
<protein>
    <recommendedName>
        <fullName evidence="1">NAD(P)H-quinone oxidoreductase subunit I, chloroplastic</fullName>
        <ecNumber evidence="1">7.1.1.-</ecNumber>
    </recommendedName>
    <alternativeName>
        <fullName evidence="1">NAD(P)H dehydrogenase subunit I</fullName>
        <shortName evidence="1">NDH subunit I</shortName>
    </alternativeName>
    <alternativeName>
        <fullName evidence="1">NADH-plastoquinone oxidoreductase subunit I</fullName>
    </alternativeName>
</protein>
<gene>
    <name evidence="1" type="primary">ndhI</name>
</gene>
<dbReference type="EC" id="7.1.1.-" evidence="1"/>
<dbReference type="EMBL" id="AF383870">
    <property type="protein sequence ID" value="AAN61814.1"/>
    <property type="molecule type" value="Genomic_DNA"/>
</dbReference>
<dbReference type="SMR" id="Q8HVJ0"/>
<dbReference type="GO" id="GO:0009535">
    <property type="term" value="C:chloroplast thylakoid membrane"/>
    <property type="evidence" value="ECO:0007669"/>
    <property type="project" value="UniProtKB-SubCell"/>
</dbReference>
<dbReference type="GO" id="GO:0051539">
    <property type="term" value="F:4 iron, 4 sulfur cluster binding"/>
    <property type="evidence" value="ECO:0007669"/>
    <property type="project" value="UniProtKB-KW"/>
</dbReference>
<dbReference type="GO" id="GO:0005506">
    <property type="term" value="F:iron ion binding"/>
    <property type="evidence" value="ECO:0007669"/>
    <property type="project" value="UniProtKB-UniRule"/>
</dbReference>
<dbReference type="GO" id="GO:0008137">
    <property type="term" value="F:NADH dehydrogenase (ubiquinone) activity"/>
    <property type="evidence" value="ECO:0007669"/>
    <property type="project" value="InterPro"/>
</dbReference>
<dbReference type="GO" id="GO:0048038">
    <property type="term" value="F:quinone binding"/>
    <property type="evidence" value="ECO:0007669"/>
    <property type="project" value="UniProtKB-KW"/>
</dbReference>
<dbReference type="GO" id="GO:0019684">
    <property type="term" value="P:photosynthesis, light reaction"/>
    <property type="evidence" value="ECO:0007669"/>
    <property type="project" value="UniProtKB-UniRule"/>
</dbReference>
<dbReference type="FunFam" id="3.30.70.3270:FF:000006">
    <property type="entry name" value="NAD(P)H-quinone oxidoreductase subunit I, chloroplastic"/>
    <property type="match status" value="1"/>
</dbReference>
<dbReference type="Gene3D" id="3.30.70.3270">
    <property type="match status" value="1"/>
</dbReference>
<dbReference type="HAMAP" id="MF_01351">
    <property type="entry name" value="NDH1_NuoI"/>
    <property type="match status" value="1"/>
</dbReference>
<dbReference type="InterPro" id="IPR017896">
    <property type="entry name" value="4Fe4S_Fe-S-bd"/>
</dbReference>
<dbReference type="InterPro" id="IPR017900">
    <property type="entry name" value="4Fe4S_Fe_S_CS"/>
</dbReference>
<dbReference type="InterPro" id="IPR010226">
    <property type="entry name" value="NADH_quinone_OxRdtase_chainI"/>
</dbReference>
<dbReference type="InterPro" id="IPR004497">
    <property type="entry name" value="NDHI"/>
</dbReference>
<dbReference type="NCBIfam" id="TIGR00403">
    <property type="entry name" value="ndhI"/>
    <property type="match status" value="1"/>
</dbReference>
<dbReference type="NCBIfam" id="TIGR01971">
    <property type="entry name" value="NuoI"/>
    <property type="match status" value="1"/>
</dbReference>
<dbReference type="NCBIfam" id="NF004537">
    <property type="entry name" value="PRK05888.1-3"/>
    <property type="match status" value="1"/>
</dbReference>
<dbReference type="PANTHER" id="PTHR47275">
    <property type="entry name" value="NAD(P)H-QUINONE OXIDOREDUCTASE SUBUNIT I, CHLOROPLASTIC"/>
    <property type="match status" value="1"/>
</dbReference>
<dbReference type="PANTHER" id="PTHR47275:SF1">
    <property type="entry name" value="NAD(P)H-QUINONE OXIDOREDUCTASE SUBUNIT I, CHLOROPLASTIC"/>
    <property type="match status" value="1"/>
</dbReference>
<dbReference type="Pfam" id="PF00037">
    <property type="entry name" value="Fer4"/>
    <property type="match status" value="2"/>
</dbReference>
<dbReference type="SUPFAM" id="SSF54862">
    <property type="entry name" value="4Fe-4S ferredoxins"/>
    <property type="match status" value="1"/>
</dbReference>
<dbReference type="PROSITE" id="PS00198">
    <property type="entry name" value="4FE4S_FER_1"/>
    <property type="match status" value="2"/>
</dbReference>
<dbReference type="PROSITE" id="PS51379">
    <property type="entry name" value="4FE4S_FER_2"/>
    <property type="match status" value="2"/>
</dbReference>
<accession>Q8HVJ0</accession>
<proteinExistence type="inferred from homology"/>
<feature type="chain" id="PRO_0000250867" description="NAD(P)H-quinone oxidoreductase subunit I, chloroplastic">
    <location>
        <begin position="1"/>
        <end position="166"/>
    </location>
</feature>
<feature type="domain" description="4Fe-4S ferredoxin-type 1" evidence="1">
    <location>
        <begin position="55"/>
        <end position="84"/>
    </location>
</feature>
<feature type="domain" description="4Fe-4S ferredoxin-type 2" evidence="1">
    <location>
        <begin position="95"/>
        <end position="124"/>
    </location>
</feature>
<feature type="binding site" evidence="1">
    <location>
        <position position="64"/>
    </location>
    <ligand>
        <name>[4Fe-4S] cluster</name>
        <dbReference type="ChEBI" id="CHEBI:49883"/>
        <label>1</label>
    </ligand>
</feature>
<feature type="binding site" evidence="1">
    <location>
        <position position="67"/>
    </location>
    <ligand>
        <name>[4Fe-4S] cluster</name>
        <dbReference type="ChEBI" id="CHEBI:49883"/>
        <label>1</label>
    </ligand>
</feature>
<feature type="binding site" evidence="1">
    <location>
        <position position="70"/>
    </location>
    <ligand>
        <name>[4Fe-4S] cluster</name>
        <dbReference type="ChEBI" id="CHEBI:49883"/>
        <label>1</label>
    </ligand>
</feature>
<feature type="binding site" evidence="1">
    <location>
        <position position="74"/>
    </location>
    <ligand>
        <name>[4Fe-4S] cluster</name>
        <dbReference type="ChEBI" id="CHEBI:49883"/>
        <label>2</label>
    </ligand>
</feature>
<feature type="binding site" evidence="1">
    <location>
        <position position="104"/>
    </location>
    <ligand>
        <name>[4Fe-4S] cluster</name>
        <dbReference type="ChEBI" id="CHEBI:49883"/>
        <label>2</label>
    </ligand>
</feature>
<feature type="binding site" evidence="1">
    <location>
        <position position="107"/>
    </location>
    <ligand>
        <name>[4Fe-4S] cluster</name>
        <dbReference type="ChEBI" id="CHEBI:49883"/>
        <label>2</label>
    </ligand>
</feature>
<feature type="binding site" evidence="1">
    <location>
        <position position="110"/>
    </location>
    <ligand>
        <name>[4Fe-4S] cluster</name>
        <dbReference type="ChEBI" id="CHEBI:49883"/>
        <label>2</label>
    </ligand>
</feature>
<feature type="binding site" evidence="1">
    <location>
        <position position="114"/>
    </location>
    <ligand>
        <name>[4Fe-4S] cluster</name>
        <dbReference type="ChEBI" id="CHEBI:49883"/>
        <label>1</label>
    </ligand>
</feature>
<organism>
    <name type="scientific">Wedelia tegetis</name>
    <dbReference type="NCBI Taxonomy" id="183098"/>
    <lineage>
        <taxon>Eukaryota</taxon>
        <taxon>Viridiplantae</taxon>
        <taxon>Streptophyta</taxon>
        <taxon>Embryophyta</taxon>
        <taxon>Tracheophyta</taxon>
        <taxon>Spermatophyta</taxon>
        <taxon>Magnoliopsida</taxon>
        <taxon>eudicotyledons</taxon>
        <taxon>Gunneridae</taxon>
        <taxon>Pentapetalae</taxon>
        <taxon>asterids</taxon>
        <taxon>campanulids</taxon>
        <taxon>Asterales</taxon>
        <taxon>Asteraceae</taxon>
        <taxon>Asteroideae</taxon>
        <taxon>Heliantheae alliance</taxon>
        <taxon>Heliantheae</taxon>
        <taxon>Wedelia</taxon>
    </lineage>
</organism>
<evidence type="ECO:0000255" key="1">
    <source>
        <dbReference type="HAMAP-Rule" id="MF_01351"/>
    </source>
</evidence>
<reference key="1">
    <citation type="submission" date="2003-01" db="EMBL/GenBank/DDBJ databases">
        <title>Chloroplast DNA phylogeny of tribe Heliantheae (Asteraceae).</title>
        <authorList>
            <person name="Panero J.L."/>
            <person name="Baldwin B.G."/>
            <person name="Schilling E.E."/>
            <person name="Clevinger J.A."/>
        </authorList>
    </citation>
    <scope>NUCLEOTIDE SEQUENCE [GENOMIC DNA]</scope>
</reference>
<name>NDHI_WEDTE</name>
<geneLocation type="chloroplast"/>
<comment type="function">
    <text evidence="1">NDH shuttles electrons from NAD(P)H:plastoquinone, via FMN and iron-sulfur (Fe-S) centers, to quinones in the photosynthetic chain and possibly in a chloroplast respiratory chain. The immediate electron acceptor for the enzyme in this species is believed to be plastoquinone. Couples the redox reaction to proton translocation, and thus conserves the redox energy in a proton gradient.</text>
</comment>
<comment type="catalytic activity">
    <reaction evidence="1">
        <text>a plastoquinone + NADH + (n+1) H(+)(in) = a plastoquinol + NAD(+) + n H(+)(out)</text>
        <dbReference type="Rhea" id="RHEA:42608"/>
        <dbReference type="Rhea" id="RHEA-COMP:9561"/>
        <dbReference type="Rhea" id="RHEA-COMP:9562"/>
        <dbReference type="ChEBI" id="CHEBI:15378"/>
        <dbReference type="ChEBI" id="CHEBI:17757"/>
        <dbReference type="ChEBI" id="CHEBI:57540"/>
        <dbReference type="ChEBI" id="CHEBI:57945"/>
        <dbReference type="ChEBI" id="CHEBI:62192"/>
    </reaction>
</comment>
<comment type="catalytic activity">
    <reaction evidence="1">
        <text>a plastoquinone + NADPH + (n+1) H(+)(in) = a plastoquinol + NADP(+) + n H(+)(out)</text>
        <dbReference type="Rhea" id="RHEA:42612"/>
        <dbReference type="Rhea" id="RHEA-COMP:9561"/>
        <dbReference type="Rhea" id="RHEA-COMP:9562"/>
        <dbReference type="ChEBI" id="CHEBI:15378"/>
        <dbReference type="ChEBI" id="CHEBI:17757"/>
        <dbReference type="ChEBI" id="CHEBI:57783"/>
        <dbReference type="ChEBI" id="CHEBI:58349"/>
        <dbReference type="ChEBI" id="CHEBI:62192"/>
    </reaction>
</comment>
<comment type="cofactor">
    <cofactor evidence="1">
        <name>[4Fe-4S] cluster</name>
        <dbReference type="ChEBI" id="CHEBI:49883"/>
    </cofactor>
    <text evidence="1">Binds 2 [4Fe-4S] clusters per subunit.</text>
</comment>
<comment type="subunit">
    <text evidence="1">NDH is composed of at least 16 different subunits, 5 of which are encoded in the nucleus.</text>
</comment>
<comment type="subcellular location">
    <subcellularLocation>
        <location evidence="1">Plastid</location>
        <location evidence="1">Chloroplast thylakoid membrane</location>
        <topology evidence="1">Peripheral membrane protein</topology>
    </subcellularLocation>
</comment>
<comment type="similarity">
    <text evidence="1">Belongs to the complex I 23 kDa subunit family.</text>
</comment>